<organism>
    <name type="scientific">Cyanophora paradoxa</name>
    <dbReference type="NCBI Taxonomy" id="2762"/>
    <lineage>
        <taxon>Eukaryota</taxon>
        <taxon>Glaucocystophyceae</taxon>
        <taxon>Cyanophoraceae</taxon>
        <taxon>Cyanophora</taxon>
    </lineage>
</organism>
<comment type="function">
    <text evidence="1">May control the interaction of photosystem II (PSII) cores with the light-harvesting antenna, regulates electron flow through the 2 photosystem reaction centers. PSII is a light-driven water plastoquinone oxidoreductase, using light energy to abstract electrons from H(2)O, generating a proton gradient subsequently used for ATP formation.</text>
</comment>
<comment type="subunit">
    <text evidence="1">PSII is composed of 1 copy each of membrane proteins PsbA, PsbB, PsbC, PsbD, PsbE, PsbF, PsbH, PsbI, PsbJ, PsbK, PsbL, PsbM, PsbT, PsbX, PsbY, PsbZ, Psb30/Ycf12, at least 3 peripheral proteins of the oxygen-evolving complex and a large number of cofactors. It forms dimeric complexes.</text>
</comment>
<comment type="subcellular location">
    <subcellularLocation>
        <location evidence="1">Plastid</location>
        <location evidence="1">Cyanelle thylakoid membrane</location>
        <topology evidence="1">Multi-pass membrane protein</topology>
    </subcellularLocation>
</comment>
<comment type="similarity">
    <text evidence="1">Belongs to the PsbZ family.</text>
</comment>
<gene>
    <name evidence="1" type="primary">psbZ</name>
    <name type="synonym">ycf9</name>
</gene>
<geneLocation type="cyanelle"/>
<keyword id="KW-0194">Cyanelle</keyword>
<keyword id="KW-0472">Membrane</keyword>
<keyword id="KW-0602">Photosynthesis</keyword>
<keyword id="KW-0604">Photosystem II</keyword>
<keyword id="KW-0934">Plastid</keyword>
<keyword id="KW-0674">Reaction center</keyword>
<keyword id="KW-0793">Thylakoid</keyword>
<keyword id="KW-0812">Transmembrane</keyword>
<keyword id="KW-1133">Transmembrane helix</keyword>
<accession>P17159</accession>
<evidence type="ECO:0000255" key="1">
    <source>
        <dbReference type="HAMAP-Rule" id="MF_00644"/>
    </source>
</evidence>
<name>PSBZ_CYAPA</name>
<dbReference type="EMBL" id="X51421">
    <property type="protein sequence ID" value="CAA35786.1"/>
    <property type="molecule type" value="Genomic_DNA"/>
</dbReference>
<dbReference type="EMBL" id="U30821">
    <property type="protein sequence ID" value="AAA81235.1"/>
    <property type="molecule type" value="Genomic_DNA"/>
</dbReference>
<dbReference type="PIR" id="S14712">
    <property type="entry name" value="S14712"/>
</dbReference>
<dbReference type="RefSeq" id="NP_043204.1">
    <property type="nucleotide sequence ID" value="NC_001675.1"/>
</dbReference>
<dbReference type="SMR" id="P17159"/>
<dbReference type="GeneID" id="801612"/>
<dbReference type="GO" id="GO:0033115">
    <property type="term" value="C:cyanelle thylakoid membrane"/>
    <property type="evidence" value="ECO:0007669"/>
    <property type="project" value="UniProtKB-SubCell"/>
</dbReference>
<dbReference type="GO" id="GO:0009539">
    <property type="term" value="C:photosystem II reaction center"/>
    <property type="evidence" value="ECO:0007669"/>
    <property type="project" value="InterPro"/>
</dbReference>
<dbReference type="GO" id="GO:0015979">
    <property type="term" value="P:photosynthesis"/>
    <property type="evidence" value="ECO:0007669"/>
    <property type="project" value="UniProtKB-UniRule"/>
</dbReference>
<dbReference type="GO" id="GO:0042549">
    <property type="term" value="P:photosystem II stabilization"/>
    <property type="evidence" value="ECO:0007669"/>
    <property type="project" value="InterPro"/>
</dbReference>
<dbReference type="Gene3D" id="1.10.287.740">
    <property type="entry name" value="Photosystem II PsbZ, reaction centre"/>
    <property type="match status" value="1"/>
</dbReference>
<dbReference type="HAMAP" id="MF_00644">
    <property type="entry name" value="PSII_PsbZ"/>
    <property type="match status" value="1"/>
</dbReference>
<dbReference type="InterPro" id="IPR002644">
    <property type="entry name" value="PSII_PsbZ"/>
</dbReference>
<dbReference type="InterPro" id="IPR036512">
    <property type="entry name" value="PSII_PsbZ_sf"/>
</dbReference>
<dbReference type="NCBIfam" id="TIGR03043">
    <property type="entry name" value="PS_II_psbZ"/>
    <property type="match status" value="1"/>
</dbReference>
<dbReference type="PANTHER" id="PTHR34971">
    <property type="entry name" value="PHOTOSYSTEM II REACTION CENTER PROTEIN Z"/>
    <property type="match status" value="1"/>
</dbReference>
<dbReference type="PANTHER" id="PTHR34971:SF2">
    <property type="entry name" value="PHOTOSYSTEM II REACTION CENTER PROTEIN Z"/>
    <property type="match status" value="1"/>
</dbReference>
<dbReference type="Pfam" id="PF01737">
    <property type="entry name" value="Ycf9"/>
    <property type="match status" value="1"/>
</dbReference>
<dbReference type="SUPFAM" id="SSF161055">
    <property type="entry name" value="PsbZ-like"/>
    <property type="match status" value="1"/>
</dbReference>
<reference key="1">
    <citation type="journal article" date="1990" name="Plant Mol. Biol.">
        <title>An ORF potentially encoding a 6.5 kDa hydrophobic protein in chloroplasts is also present in the cyanellar genome of Cyanophora paradoxa.</title>
        <authorList>
            <person name="Evrard J.L."/>
            <person name="Kuntz M."/>
            <person name="Weil J.H."/>
        </authorList>
    </citation>
    <scope>NUCLEOTIDE SEQUENCE [GENOMIC DNA]</scope>
    <source>
        <strain>UTEX LB 555 / Pringsheim</strain>
    </source>
</reference>
<reference key="2">
    <citation type="journal article" date="1995" name="Plant Mol. Biol. Rep.">
        <title>Nucleotide sequence of the cyanelle DNA from Cyanophora paradoxa.</title>
        <authorList>
            <person name="Stirewalt V.L."/>
            <person name="Michalowski C.B."/>
            <person name="Loeffelhardt W."/>
            <person name="Bohnert H.J."/>
            <person name="Bryant D.A."/>
        </authorList>
    </citation>
    <scope>NUCLEOTIDE SEQUENCE [LARGE SCALE GENOMIC DNA]</scope>
    <source>
        <strain>UTEX LB 555 / Pringsheim</strain>
    </source>
</reference>
<reference key="3">
    <citation type="book" date="1997" name="Eukaryotism and symbiosis">
        <title>The complete sequence of the cyanelle genome of Cyanophora paradoxa: the genetic complexity of a primitive plastid.</title>
        <editorList>
            <person name="Schenk H.E.A."/>
            <person name="Herrmann R."/>
            <person name="Jeon K.W."/>
            <person name="Mueller N.E."/>
            <person name="Schwemmler W."/>
        </editorList>
        <authorList>
            <person name="Loeffelhardt W."/>
            <person name="Stirewalt V.L."/>
            <person name="Michalowski C.B."/>
            <person name="Annarella M."/>
            <person name="Farley J.Y."/>
            <person name="Schluchter W.M."/>
            <person name="Chung S."/>
            <person name="Newmann-Spallart C."/>
            <person name="Steiner J.M."/>
            <person name="Jakowitsch J."/>
            <person name="Bohnert H.J."/>
            <person name="Bryant D.A."/>
        </authorList>
    </citation>
    <scope>NUCLEOTIDE SEQUENCE [LARGE SCALE GENOMIC DNA]</scope>
    <source>
        <strain>UTEX LB 555 / Pringsheim</strain>
    </source>
</reference>
<sequence>MLIAFQGAVFALVLLSFVLIVAVPVALASPGEWERSQRLIYAGAALWTSLIIVIGVLDSVVANQA</sequence>
<feature type="chain" id="PRO_0000217696" description="Photosystem II reaction center protein Z">
    <location>
        <begin position="1"/>
        <end position="65"/>
    </location>
</feature>
<feature type="transmembrane region" description="Helical" evidence="1">
    <location>
        <begin position="8"/>
        <end position="28"/>
    </location>
</feature>
<feature type="transmembrane region" description="Helical" evidence="1">
    <location>
        <begin position="41"/>
        <end position="61"/>
    </location>
</feature>
<proteinExistence type="inferred from homology"/>
<protein>
    <recommendedName>
        <fullName evidence="1">Photosystem II reaction center protein Z</fullName>
        <shortName evidence="1">PSII-Z</shortName>
    </recommendedName>
</protein>